<evidence type="ECO:0000255" key="1">
    <source>
        <dbReference type="HAMAP-Rule" id="MF_01322"/>
    </source>
</evidence>
<protein>
    <recommendedName>
        <fullName evidence="1">DNA-directed RNA polymerase subunit beta'</fullName>
        <shortName evidence="1">RNAP subunit beta'</shortName>
        <ecNumber evidence="1">2.7.7.6</ecNumber>
    </recommendedName>
    <alternativeName>
        <fullName evidence="1">RNA polymerase subunit beta'</fullName>
    </alternativeName>
    <alternativeName>
        <fullName evidence="1">Transcriptase subunit beta'</fullName>
    </alternativeName>
</protein>
<proteinExistence type="inferred from homology"/>
<reference key="1">
    <citation type="submission" date="2006-08" db="EMBL/GenBank/DDBJ databases">
        <title>Complete sequence of Shewanella frigidimarina NCIMB 400.</title>
        <authorList>
            <consortium name="US DOE Joint Genome Institute"/>
            <person name="Copeland A."/>
            <person name="Lucas S."/>
            <person name="Lapidus A."/>
            <person name="Barry K."/>
            <person name="Detter J.C."/>
            <person name="Glavina del Rio T."/>
            <person name="Hammon N."/>
            <person name="Israni S."/>
            <person name="Dalin E."/>
            <person name="Tice H."/>
            <person name="Pitluck S."/>
            <person name="Fredrickson J.K."/>
            <person name="Kolker E."/>
            <person name="McCuel L.A."/>
            <person name="DiChristina T."/>
            <person name="Nealson K.H."/>
            <person name="Newman D."/>
            <person name="Tiedje J.M."/>
            <person name="Zhou J."/>
            <person name="Romine M.F."/>
            <person name="Culley D.E."/>
            <person name="Serres M."/>
            <person name="Chertkov O."/>
            <person name="Brettin T."/>
            <person name="Bruce D."/>
            <person name="Han C."/>
            <person name="Tapia R."/>
            <person name="Gilna P."/>
            <person name="Schmutz J."/>
            <person name="Larimer F."/>
            <person name="Land M."/>
            <person name="Hauser L."/>
            <person name="Kyrpides N."/>
            <person name="Mikhailova N."/>
            <person name="Richardson P."/>
        </authorList>
    </citation>
    <scope>NUCLEOTIDE SEQUENCE [LARGE SCALE GENOMIC DNA]</scope>
    <source>
        <strain>NCIMB 400</strain>
    </source>
</reference>
<keyword id="KW-0240">DNA-directed RNA polymerase</keyword>
<keyword id="KW-0460">Magnesium</keyword>
<keyword id="KW-0479">Metal-binding</keyword>
<keyword id="KW-0548">Nucleotidyltransferase</keyword>
<keyword id="KW-1185">Reference proteome</keyword>
<keyword id="KW-0804">Transcription</keyword>
<keyword id="KW-0808">Transferase</keyword>
<keyword id="KW-0862">Zinc</keyword>
<comment type="function">
    <text evidence="1">DNA-dependent RNA polymerase catalyzes the transcription of DNA into RNA using the four ribonucleoside triphosphates as substrates.</text>
</comment>
<comment type="catalytic activity">
    <reaction evidence="1">
        <text>RNA(n) + a ribonucleoside 5'-triphosphate = RNA(n+1) + diphosphate</text>
        <dbReference type="Rhea" id="RHEA:21248"/>
        <dbReference type="Rhea" id="RHEA-COMP:14527"/>
        <dbReference type="Rhea" id="RHEA-COMP:17342"/>
        <dbReference type="ChEBI" id="CHEBI:33019"/>
        <dbReference type="ChEBI" id="CHEBI:61557"/>
        <dbReference type="ChEBI" id="CHEBI:140395"/>
        <dbReference type="EC" id="2.7.7.6"/>
    </reaction>
</comment>
<comment type="cofactor">
    <cofactor evidence="1">
        <name>Mg(2+)</name>
        <dbReference type="ChEBI" id="CHEBI:18420"/>
    </cofactor>
    <text evidence="1">Binds 1 Mg(2+) ion per subunit.</text>
</comment>
<comment type="cofactor">
    <cofactor evidence="1">
        <name>Zn(2+)</name>
        <dbReference type="ChEBI" id="CHEBI:29105"/>
    </cofactor>
    <text evidence="1">Binds 2 Zn(2+) ions per subunit.</text>
</comment>
<comment type="subunit">
    <text evidence="1">The RNAP catalytic core consists of 2 alpha, 1 beta, 1 beta' and 1 omega subunit. When a sigma factor is associated with the core the holoenzyme is formed, which can initiate transcription.</text>
</comment>
<comment type="similarity">
    <text evidence="1">Belongs to the RNA polymerase beta' chain family.</text>
</comment>
<dbReference type="EC" id="2.7.7.6" evidence="1"/>
<dbReference type="EMBL" id="CP000447">
    <property type="protein sequence ID" value="ABI70005.1"/>
    <property type="molecule type" value="Genomic_DNA"/>
</dbReference>
<dbReference type="RefSeq" id="WP_011635634.1">
    <property type="nucleotide sequence ID" value="NC_008345.1"/>
</dbReference>
<dbReference type="SMR" id="Q089R0"/>
<dbReference type="STRING" id="318167.Sfri_0142"/>
<dbReference type="KEGG" id="sfr:Sfri_0142"/>
<dbReference type="eggNOG" id="COG0086">
    <property type="taxonomic scope" value="Bacteria"/>
</dbReference>
<dbReference type="HOGENOM" id="CLU_000524_3_1_6"/>
<dbReference type="OrthoDB" id="9815296at2"/>
<dbReference type="Proteomes" id="UP000000684">
    <property type="component" value="Chromosome"/>
</dbReference>
<dbReference type="GO" id="GO:0000428">
    <property type="term" value="C:DNA-directed RNA polymerase complex"/>
    <property type="evidence" value="ECO:0007669"/>
    <property type="project" value="UniProtKB-KW"/>
</dbReference>
<dbReference type="GO" id="GO:0003677">
    <property type="term" value="F:DNA binding"/>
    <property type="evidence" value="ECO:0007669"/>
    <property type="project" value="UniProtKB-UniRule"/>
</dbReference>
<dbReference type="GO" id="GO:0003899">
    <property type="term" value="F:DNA-directed RNA polymerase activity"/>
    <property type="evidence" value="ECO:0007669"/>
    <property type="project" value="UniProtKB-UniRule"/>
</dbReference>
<dbReference type="GO" id="GO:0000287">
    <property type="term" value="F:magnesium ion binding"/>
    <property type="evidence" value="ECO:0007669"/>
    <property type="project" value="UniProtKB-UniRule"/>
</dbReference>
<dbReference type="GO" id="GO:0008270">
    <property type="term" value="F:zinc ion binding"/>
    <property type="evidence" value="ECO:0007669"/>
    <property type="project" value="UniProtKB-UniRule"/>
</dbReference>
<dbReference type="GO" id="GO:0006351">
    <property type="term" value="P:DNA-templated transcription"/>
    <property type="evidence" value="ECO:0007669"/>
    <property type="project" value="UniProtKB-UniRule"/>
</dbReference>
<dbReference type="CDD" id="cd02655">
    <property type="entry name" value="RNAP_beta'_C"/>
    <property type="match status" value="1"/>
</dbReference>
<dbReference type="CDD" id="cd01609">
    <property type="entry name" value="RNAP_beta'_N"/>
    <property type="match status" value="1"/>
</dbReference>
<dbReference type="FunFam" id="1.10.132.30:FF:000003">
    <property type="entry name" value="DNA-directed RNA polymerase subunit beta"/>
    <property type="match status" value="1"/>
</dbReference>
<dbReference type="FunFam" id="1.10.150.390:FF:000002">
    <property type="entry name" value="DNA-directed RNA polymerase subunit beta"/>
    <property type="match status" value="1"/>
</dbReference>
<dbReference type="FunFam" id="1.10.40.90:FF:000001">
    <property type="entry name" value="DNA-directed RNA polymerase subunit beta"/>
    <property type="match status" value="1"/>
</dbReference>
<dbReference type="FunFam" id="4.10.860.120:FF:000001">
    <property type="entry name" value="DNA-directed RNA polymerase subunit beta"/>
    <property type="match status" value="1"/>
</dbReference>
<dbReference type="Gene3D" id="1.10.132.30">
    <property type="match status" value="1"/>
</dbReference>
<dbReference type="Gene3D" id="1.10.150.390">
    <property type="match status" value="1"/>
</dbReference>
<dbReference type="Gene3D" id="1.10.1790.20">
    <property type="match status" value="1"/>
</dbReference>
<dbReference type="Gene3D" id="1.10.40.90">
    <property type="match status" value="1"/>
</dbReference>
<dbReference type="Gene3D" id="2.40.40.20">
    <property type="match status" value="1"/>
</dbReference>
<dbReference type="Gene3D" id="2.40.50.100">
    <property type="match status" value="3"/>
</dbReference>
<dbReference type="Gene3D" id="4.10.860.120">
    <property type="entry name" value="RNA polymerase II, clamp domain"/>
    <property type="match status" value="1"/>
</dbReference>
<dbReference type="Gene3D" id="1.10.274.100">
    <property type="entry name" value="RNA polymerase Rpb1, domain 3"/>
    <property type="match status" value="1"/>
</dbReference>
<dbReference type="HAMAP" id="MF_01322">
    <property type="entry name" value="RNApol_bact_RpoC"/>
    <property type="match status" value="1"/>
</dbReference>
<dbReference type="InterPro" id="IPR045867">
    <property type="entry name" value="DNA-dir_RpoC_beta_prime"/>
</dbReference>
<dbReference type="InterPro" id="IPR012754">
    <property type="entry name" value="DNA-dir_RpoC_beta_prime_bact"/>
</dbReference>
<dbReference type="InterPro" id="IPR000722">
    <property type="entry name" value="RNA_pol_asu"/>
</dbReference>
<dbReference type="InterPro" id="IPR006592">
    <property type="entry name" value="RNA_pol_N"/>
</dbReference>
<dbReference type="InterPro" id="IPR007080">
    <property type="entry name" value="RNA_pol_Rpb1_1"/>
</dbReference>
<dbReference type="InterPro" id="IPR007066">
    <property type="entry name" value="RNA_pol_Rpb1_3"/>
</dbReference>
<dbReference type="InterPro" id="IPR042102">
    <property type="entry name" value="RNA_pol_Rpb1_3_sf"/>
</dbReference>
<dbReference type="InterPro" id="IPR007083">
    <property type="entry name" value="RNA_pol_Rpb1_4"/>
</dbReference>
<dbReference type="InterPro" id="IPR007081">
    <property type="entry name" value="RNA_pol_Rpb1_5"/>
</dbReference>
<dbReference type="InterPro" id="IPR044893">
    <property type="entry name" value="RNA_pol_Rpb1_clamp_domain"/>
</dbReference>
<dbReference type="InterPro" id="IPR038120">
    <property type="entry name" value="Rpb1_funnel_sf"/>
</dbReference>
<dbReference type="NCBIfam" id="TIGR02386">
    <property type="entry name" value="rpoC_TIGR"/>
    <property type="match status" value="1"/>
</dbReference>
<dbReference type="PANTHER" id="PTHR19376">
    <property type="entry name" value="DNA-DIRECTED RNA POLYMERASE"/>
    <property type="match status" value="1"/>
</dbReference>
<dbReference type="PANTHER" id="PTHR19376:SF54">
    <property type="entry name" value="DNA-DIRECTED RNA POLYMERASE SUBUNIT BETA"/>
    <property type="match status" value="1"/>
</dbReference>
<dbReference type="Pfam" id="PF04997">
    <property type="entry name" value="RNA_pol_Rpb1_1"/>
    <property type="match status" value="1"/>
</dbReference>
<dbReference type="Pfam" id="PF00623">
    <property type="entry name" value="RNA_pol_Rpb1_2"/>
    <property type="match status" value="2"/>
</dbReference>
<dbReference type="Pfam" id="PF04983">
    <property type="entry name" value="RNA_pol_Rpb1_3"/>
    <property type="match status" value="1"/>
</dbReference>
<dbReference type="Pfam" id="PF05000">
    <property type="entry name" value="RNA_pol_Rpb1_4"/>
    <property type="match status" value="1"/>
</dbReference>
<dbReference type="Pfam" id="PF04998">
    <property type="entry name" value="RNA_pol_Rpb1_5"/>
    <property type="match status" value="1"/>
</dbReference>
<dbReference type="SMART" id="SM00663">
    <property type="entry name" value="RPOLA_N"/>
    <property type="match status" value="1"/>
</dbReference>
<dbReference type="SUPFAM" id="SSF64484">
    <property type="entry name" value="beta and beta-prime subunits of DNA dependent RNA-polymerase"/>
    <property type="match status" value="1"/>
</dbReference>
<gene>
    <name evidence="1" type="primary">rpoC</name>
    <name type="ordered locus">Sfri_0142</name>
</gene>
<accession>Q089R0</accession>
<feature type="chain" id="PRO_1000086416" description="DNA-directed RNA polymerase subunit beta'">
    <location>
        <begin position="1"/>
        <end position="1408"/>
    </location>
</feature>
<feature type="binding site" evidence="1">
    <location>
        <position position="70"/>
    </location>
    <ligand>
        <name>Zn(2+)</name>
        <dbReference type="ChEBI" id="CHEBI:29105"/>
        <label>1</label>
    </ligand>
</feature>
<feature type="binding site" evidence="1">
    <location>
        <position position="72"/>
    </location>
    <ligand>
        <name>Zn(2+)</name>
        <dbReference type="ChEBI" id="CHEBI:29105"/>
        <label>1</label>
    </ligand>
</feature>
<feature type="binding site" evidence="1">
    <location>
        <position position="85"/>
    </location>
    <ligand>
        <name>Zn(2+)</name>
        <dbReference type="ChEBI" id="CHEBI:29105"/>
        <label>1</label>
    </ligand>
</feature>
<feature type="binding site" evidence="1">
    <location>
        <position position="88"/>
    </location>
    <ligand>
        <name>Zn(2+)</name>
        <dbReference type="ChEBI" id="CHEBI:29105"/>
        <label>1</label>
    </ligand>
</feature>
<feature type="binding site" evidence="1">
    <location>
        <position position="460"/>
    </location>
    <ligand>
        <name>Mg(2+)</name>
        <dbReference type="ChEBI" id="CHEBI:18420"/>
    </ligand>
</feature>
<feature type="binding site" evidence="1">
    <location>
        <position position="462"/>
    </location>
    <ligand>
        <name>Mg(2+)</name>
        <dbReference type="ChEBI" id="CHEBI:18420"/>
    </ligand>
</feature>
<feature type="binding site" evidence="1">
    <location>
        <position position="464"/>
    </location>
    <ligand>
        <name>Mg(2+)</name>
        <dbReference type="ChEBI" id="CHEBI:18420"/>
    </ligand>
</feature>
<feature type="binding site" evidence="1">
    <location>
        <position position="814"/>
    </location>
    <ligand>
        <name>Zn(2+)</name>
        <dbReference type="ChEBI" id="CHEBI:29105"/>
        <label>2</label>
    </ligand>
</feature>
<feature type="binding site" evidence="1">
    <location>
        <position position="888"/>
    </location>
    <ligand>
        <name>Zn(2+)</name>
        <dbReference type="ChEBI" id="CHEBI:29105"/>
        <label>2</label>
    </ligand>
</feature>
<feature type="binding site" evidence="1">
    <location>
        <position position="895"/>
    </location>
    <ligand>
        <name>Zn(2+)</name>
        <dbReference type="ChEBI" id="CHEBI:29105"/>
        <label>2</label>
    </ligand>
</feature>
<feature type="binding site" evidence="1">
    <location>
        <position position="898"/>
    </location>
    <ligand>
        <name>Zn(2+)</name>
        <dbReference type="ChEBI" id="CHEBI:29105"/>
        <label>2</label>
    </ligand>
</feature>
<name>RPOC_SHEFN</name>
<organism>
    <name type="scientific">Shewanella frigidimarina (strain NCIMB 400)</name>
    <dbReference type="NCBI Taxonomy" id="318167"/>
    <lineage>
        <taxon>Bacteria</taxon>
        <taxon>Pseudomonadati</taxon>
        <taxon>Pseudomonadota</taxon>
        <taxon>Gammaproteobacteria</taxon>
        <taxon>Alteromonadales</taxon>
        <taxon>Shewanellaceae</taxon>
        <taxon>Shewanella</taxon>
    </lineage>
</organism>
<sequence length="1408" mass="155571">MKDLLKFLKQQSKTEEFNGIKIGLASPDLIRSWSFGEVKKPETINYRTFKPEREGLFCARIFGPVKDYECLCGKYKRLKHRGVICEKCGVEVTQTKVRRERMGHIDLASPVAHIWFLKSLPSRIGLMLDMTLRDIERVLYFESFVVIEPGMTTLERGQMLTEETYLDALEEYGDEFEAKMGAEAVLELLRAINLAEQIEQMREELPSINSETRRKKVTKRLKLMEAFFTSGNKPEWMILKVLPVLPPDLRPLVPLDGGRFATSDLNDLYRRVINRNNRLKRLLDLAAPDIIVRNEKRMLQESVDALLDNGRRGRAITGSNKRPLKSLADMIKGKQGRFRQNLLGKRVDYSGRSVITVGPTLRLHQCGLPKKMALELFKPFIYGKLEARGLATTIKAAKKMVEREQAEVWDVLDEVIREHPVMLNRAPTLHRLGIQAFEPVLIEGKAIQLHPLVCAAYNADFDGDQMAVHVPLTLEAQLEARALMMSTNNILSPANGEPVITPSQDVVLGLYYTSRECINGRGEGMAFADVSEVEKAYATGVAELHARVKVRITETNIADDGERTKSTRIIDTTVGRALLSLILPEGLSYDLVNQNMGKKQISKLLNTCYRQLGLKDTVIFADQLMYTGFRFATISGASVGIDDMVIPDEKYTLVADAEAEVLEIQEQFQSGLVTAGERYNKVIDIWASANEKVSKAMMENLSTETVINRDGVPEQQASFNSIYMMADSGARGSAAQIRQLAGMRGLMAKPDGSIIETPITANFREGLNVLQYFISTHGARKGLADTALKTANSGYLTRRLVDVAQDLVVIEDDCGVEHGLTMKPLIEGGDVVEPLRERVLGRVVALDVMKPGTNEVLAPRNTLLDEAWCNTLEEHSIDEVIVRSVITCDTDFGVCAACYGRDLARGHIINHGEAIGVVAAQSIGEPGTQLTMRTFHIGGAASRASAENNVQVKNAGSLKLHNAKHVSNIDGKLVIVSRSSELAIIDELGREKERYKVPYGTVLEKLEDSEVAAGEIIANWDPHTHPIISEVAGSVKFVDMIDGVTMTRQTDELTGLSSVVVLDVGARTSAGKELRPAIRLVDADGNDLMIPGTEVPAQYFLPGNAIVSKDDNAKINVGDPLARIPQESSKTRDITGGLPRVADLFEARKPKEPAILAEISGTISFGKETKGKRRLVITPADGSEHYEEMIPKWRNLNVFEGEKVERGEVIADGPEAAHDILRLRGIHNVANYIVNEVQDVYRLQGVKINDKHIEVIIRQMLRKCLITSTGDTEFLEGEQAEVSRVKIANRELIAQGKTPATFERELLGITKASLATESFISAASFQETTRVLTEAAVGGKSDPLRGLKENVIVGRLIPAGTGYAYHKTRNEERAKILSSRGKVETTTVTASEAEKNLADLLNLAGSQD</sequence>